<accession>Q9C9K2</accession>
<accession>Q8LEL6</accession>
<gene>
    <name type="primary">CP12-3</name>
    <name type="ordered locus">At1g76560</name>
    <name type="ORF">F14G6.16</name>
</gene>
<evidence type="ECO:0000250" key="1"/>
<evidence type="ECO:0000255" key="2"/>
<evidence type="ECO:0000256" key="3">
    <source>
        <dbReference type="SAM" id="MobiDB-lite"/>
    </source>
</evidence>
<evidence type="ECO:0000269" key="4">
    <source>
    </source>
</evidence>
<evidence type="ECO:0000269" key="5">
    <source>
    </source>
</evidence>
<evidence type="ECO:0000305" key="6"/>
<dbReference type="EMBL" id="AC015450">
    <property type="protein sequence ID" value="AAG51942.1"/>
    <property type="molecule type" value="Genomic_DNA"/>
</dbReference>
<dbReference type="EMBL" id="CP002684">
    <property type="protein sequence ID" value="AEE35859.1"/>
    <property type="molecule type" value="Genomic_DNA"/>
</dbReference>
<dbReference type="EMBL" id="BT004753">
    <property type="protein sequence ID" value="AAO44019.1"/>
    <property type="molecule type" value="mRNA"/>
</dbReference>
<dbReference type="EMBL" id="AK227842">
    <property type="protein sequence ID" value="BAE99820.1"/>
    <property type="molecule type" value="mRNA"/>
</dbReference>
<dbReference type="EMBL" id="AY085359">
    <property type="protein sequence ID" value="AAM62589.1"/>
    <property type="molecule type" value="mRNA"/>
</dbReference>
<dbReference type="PIR" id="F96793">
    <property type="entry name" value="F96793"/>
</dbReference>
<dbReference type="RefSeq" id="NP_565134.1">
    <property type="nucleotide sequence ID" value="NM_106306.3"/>
</dbReference>
<dbReference type="STRING" id="3702.Q9C9K2"/>
<dbReference type="PaxDb" id="3702-AT1G76560.1"/>
<dbReference type="ProteomicsDB" id="220617"/>
<dbReference type="EnsemblPlants" id="AT1G76560.1">
    <property type="protein sequence ID" value="AT1G76560.1"/>
    <property type="gene ID" value="AT1G76560"/>
</dbReference>
<dbReference type="GeneID" id="843989"/>
<dbReference type="Gramene" id="AT1G76560.1">
    <property type="protein sequence ID" value="AT1G76560.1"/>
    <property type="gene ID" value="AT1G76560"/>
</dbReference>
<dbReference type="KEGG" id="ath:AT1G76560"/>
<dbReference type="Araport" id="AT1G76560"/>
<dbReference type="TAIR" id="AT1G76560">
    <property type="gene designation" value="CP12-3"/>
</dbReference>
<dbReference type="eggNOG" id="ENOG502S5FN">
    <property type="taxonomic scope" value="Eukaryota"/>
</dbReference>
<dbReference type="HOGENOM" id="CLU_1899077_0_0_1"/>
<dbReference type="InParanoid" id="Q9C9K2"/>
<dbReference type="OMA" id="GSDMFRV"/>
<dbReference type="PhylomeDB" id="Q9C9K2"/>
<dbReference type="PRO" id="PR:Q9C9K2"/>
<dbReference type="Proteomes" id="UP000006548">
    <property type="component" value="Chromosome 1"/>
</dbReference>
<dbReference type="ExpressionAtlas" id="Q9C9K2">
    <property type="expression patterns" value="baseline and differential"/>
</dbReference>
<dbReference type="GO" id="GO:0009507">
    <property type="term" value="C:chloroplast"/>
    <property type="evidence" value="ECO:0000314"/>
    <property type="project" value="TAIR"/>
</dbReference>
<dbReference type="GO" id="GO:0032991">
    <property type="term" value="C:protein-containing complex"/>
    <property type="evidence" value="ECO:0000314"/>
    <property type="project" value="UniProtKB"/>
</dbReference>
<dbReference type="GO" id="GO:0005507">
    <property type="term" value="F:copper ion binding"/>
    <property type="evidence" value="ECO:0000250"/>
    <property type="project" value="UniProtKB"/>
</dbReference>
<dbReference type="GO" id="GO:0016151">
    <property type="term" value="F:nickel cation binding"/>
    <property type="evidence" value="ECO:0000250"/>
    <property type="project" value="UniProtKB"/>
</dbReference>
<dbReference type="GO" id="GO:0071454">
    <property type="term" value="P:cellular response to anoxia"/>
    <property type="evidence" value="ECO:0000270"/>
    <property type="project" value="UniProtKB"/>
</dbReference>
<dbReference type="GO" id="GO:0034605">
    <property type="term" value="P:cellular response to heat"/>
    <property type="evidence" value="ECO:0000270"/>
    <property type="project" value="UniProtKB"/>
</dbReference>
<dbReference type="GO" id="GO:0080153">
    <property type="term" value="P:negative regulation of reductive pentose-phosphate cycle"/>
    <property type="evidence" value="ECO:0000314"/>
    <property type="project" value="TAIR"/>
</dbReference>
<dbReference type="GO" id="GO:0019253">
    <property type="term" value="P:reductive pentose-phosphate cycle"/>
    <property type="evidence" value="ECO:0007669"/>
    <property type="project" value="UniProtKB-KW"/>
</dbReference>
<dbReference type="InterPro" id="IPR039314">
    <property type="entry name" value="CP12-like"/>
</dbReference>
<dbReference type="InterPro" id="IPR003823">
    <property type="entry name" value="CP12_dom"/>
</dbReference>
<dbReference type="PANTHER" id="PTHR33921">
    <property type="entry name" value="CALVIN CYCLE PROTEIN CP12-2, CHLOROPLASTIC"/>
    <property type="match status" value="1"/>
</dbReference>
<dbReference type="PANTHER" id="PTHR33921:SF16">
    <property type="entry name" value="CALVIN CYCLE PROTEIN CP12-3, CHLOROPLASTIC"/>
    <property type="match status" value="1"/>
</dbReference>
<dbReference type="Pfam" id="PF02672">
    <property type="entry name" value="CP12"/>
    <property type="match status" value="1"/>
</dbReference>
<dbReference type="SMART" id="SM01093">
    <property type="entry name" value="CP12"/>
    <property type="match status" value="1"/>
</dbReference>
<name>CP123_ARATH</name>
<organism>
    <name type="scientific">Arabidopsis thaliana</name>
    <name type="common">Mouse-ear cress</name>
    <dbReference type="NCBI Taxonomy" id="3702"/>
    <lineage>
        <taxon>Eukaryota</taxon>
        <taxon>Viridiplantae</taxon>
        <taxon>Streptophyta</taxon>
        <taxon>Embryophyta</taxon>
        <taxon>Tracheophyta</taxon>
        <taxon>Spermatophyta</taxon>
        <taxon>Magnoliopsida</taxon>
        <taxon>eudicotyledons</taxon>
        <taxon>Gunneridae</taxon>
        <taxon>Pentapetalae</taxon>
        <taxon>rosids</taxon>
        <taxon>malvids</taxon>
        <taxon>Brassicales</taxon>
        <taxon>Brassicaceae</taxon>
        <taxon>Camelineae</taxon>
        <taxon>Arabidopsis</taxon>
    </lineage>
</organism>
<proteinExistence type="evidence at protein level"/>
<feature type="transit peptide" description="Chloroplast" evidence="2">
    <location>
        <begin position="1"/>
        <end position="42"/>
    </location>
</feature>
<feature type="chain" id="PRO_0000417432" description="Calvin cycle protein CP12-3, chloroplastic">
    <location>
        <begin position="43"/>
        <end position="134"/>
    </location>
</feature>
<feature type="region of interest" description="Disordered" evidence="3">
    <location>
        <begin position="1"/>
        <end position="21"/>
    </location>
</feature>
<feature type="disulfide bond" evidence="1">
    <location>
        <begin position="78"/>
        <end position="87"/>
    </location>
</feature>
<feature type="disulfide bond" evidence="1">
    <location>
        <begin position="120"/>
        <end position="129"/>
    </location>
</feature>
<feature type="sequence conflict" description="In Ref. 5; AAM62589." evidence="6" ref="5">
    <original>Q</original>
    <variation>H</variation>
    <location>
        <position position="18"/>
    </location>
</feature>
<sequence length="134" mass="15449">MISGSATASHGRVLLPSQRERRPVSTGSNILRFRETVPRQFSLMMVTKATAKYMGTKMREEKLSEMIEEKVKEATEVCEAEEMSEECRVAWDEVEEVSQARADLRIKLKLLNQDPLESFCQENPETDECRIYED</sequence>
<protein>
    <recommendedName>
        <fullName>Calvin cycle protein CP12-3, chloroplastic</fullName>
    </recommendedName>
    <alternativeName>
        <fullName>CP12 domain-containing protein 3</fullName>
    </alternativeName>
    <alternativeName>
        <fullName>Chloroplast protein 12-3</fullName>
    </alternativeName>
</protein>
<comment type="function">
    <text evidence="5">Acts as a linker essential in the assembly of a core complex of PRK/GAPDH. Coordinates the reversible inactivation of chloroplast enzymes GAPDH and PRK during darkness in photosynthetic tissues.</text>
</comment>
<comment type="biophysicochemical properties">
    <redoxPotential>
        <text evidence="5">E(0) are -332 mV and -373 mV for the disulfide bonds at pH 7.9.</text>
    </redoxPotential>
</comment>
<comment type="subunit">
    <text evidence="1 5">Monomer (By similarity). Component of a complex that contains two dimers of PRK, two tetramers of GAPDH and CP12. CP12 associates with GAPDH, causing its conformation to change. This GAPDH/CP12 complex binds PRK to form a half-complex (one unit). This unit probably dimerizes due partially to interactions between the enzymes of each unit.</text>
</comment>
<comment type="subcellular location">
    <subcellularLocation>
        <location evidence="5">Plastid</location>
        <location evidence="5">Chloroplast</location>
    </subcellularLocation>
</comment>
<comment type="tissue specificity">
    <text evidence="4">Mostly expressed, at low levels, in stems and, to a lesser extent, in leaves and roots.</text>
</comment>
<comment type="developmental stage">
    <text evidence="4">In flowers, restricted to the stigma and anthers.</text>
</comment>
<comment type="induction">
    <text evidence="4">Insensitive to light/darkness. Slightly repressed by heat. Induced by anaerobic treatment.</text>
</comment>
<comment type="PTM">
    <text>Contains two disulfide bonds; only the oxidized protein, with two disulfide bonds, is active in complex formation. The C-terminal disulfide is involved in the interaction with GAPDH and the N-terminal disulfide mediates the binding of PRK with this binary complex.</text>
</comment>
<comment type="miscellaneous">
    <text evidence="1">Binds copper and nickel ions. Copper ions catalyze the oxidation of reduced thiol groups and thus promote formation of the disulfide bonds required for linker activity (By similarity).</text>
</comment>
<comment type="similarity">
    <text evidence="6">Belongs to the CP12 family.</text>
</comment>
<reference key="1">
    <citation type="journal article" date="2000" name="Nature">
        <title>Sequence and analysis of chromosome 1 of the plant Arabidopsis thaliana.</title>
        <authorList>
            <person name="Theologis A."/>
            <person name="Ecker J.R."/>
            <person name="Palm C.J."/>
            <person name="Federspiel N.A."/>
            <person name="Kaul S."/>
            <person name="White O."/>
            <person name="Alonso J."/>
            <person name="Altafi H."/>
            <person name="Araujo R."/>
            <person name="Bowman C.L."/>
            <person name="Brooks S.Y."/>
            <person name="Buehler E."/>
            <person name="Chan A."/>
            <person name="Chao Q."/>
            <person name="Chen H."/>
            <person name="Cheuk R.F."/>
            <person name="Chin C.W."/>
            <person name="Chung M.K."/>
            <person name="Conn L."/>
            <person name="Conway A.B."/>
            <person name="Conway A.R."/>
            <person name="Creasy T.H."/>
            <person name="Dewar K."/>
            <person name="Dunn P."/>
            <person name="Etgu P."/>
            <person name="Feldblyum T.V."/>
            <person name="Feng J.-D."/>
            <person name="Fong B."/>
            <person name="Fujii C.Y."/>
            <person name="Gill J.E."/>
            <person name="Goldsmith A.D."/>
            <person name="Haas B."/>
            <person name="Hansen N.F."/>
            <person name="Hughes B."/>
            <person name="Huizar L."/>
            <person name="Hunter J.L."/>
            <person name="Jenkins J."/>
            <person name="Johnson-Hopson C."/>
            <person name="Khan S."/>
            <person name="Khaykin E."/>
            <person name="Kim C.J."/>
            <person name="Koo H.L."/>
            <person name="Kremenetskaia I."/>
            <person name="Kurtz D.B."/>
            <person name="Kwan A."/>
            <person name="Lam B."/>
            <person name="Langin-Hooper S."/>
            <person name="Lee A."/>
            <person name="Lee J.M."/>
            <person name="Lenz C.A."/>
            <person name="Li J.H."/>
            <person name="Li Y.-P."/>
            <person name="Lin X."/>
            <person name="Liu S.X."/>
            <person name="Liu Z.A."/>
            <person name="Luros J.S."/>
            <person name="Maiti R."/>
            <person name="Marziali A."/>
            <person name="Militscher J."/>
            <person name="Miranda M."/>
            <person name="Nguyen M."/>
            <person name="Nierman W.C."/>
            <person name="Osborne B.I."/>
            <person name="Pai G."/>
            <person name="Peterson J."/>
            <person name="Pham P.K."/>
            <person name="Rizzo M."/>
            <person name="Rooney T."/>
            <person name="Rowley D."/>
            <person name="Sakano H."/>
            <person name="Salzberg S.L."/>
            <person name="Schwartz J.R."/>
            <person name="Shinn P."/>
            <person name="Southwick A.M."/>
            <person name="Sun H."/>
            <person name="Tallon L.J."/>
            <person name="Tambunga G."/>
            <person name="Toriumi M.J."/>
            <person name="Town C.D."/>
            <person name="Utterback T."/>
            <person name="Van Aken S."/>
            <person name="Vaysberg M."/>
            <person name="Vysotskaia V.S."/>
            <person name="Walker M."/>
            <person name="Wu D."/>
            <person name="Yu G."/>
            <person name="Fraser C.M."/>
            <person name="Venter J.C."/>
            <person name="Davis R.W."/>
        </authorList>
    </citation>
    <scope>NUCLEOTIDE SEQUENCE [LARGE SCALE GENOMIC DNA]</scope>
    <source>
        <strain>cv. Columbia</strain>
    </source>
</reference>
<reference key="2">
    <citation type="journal article" date="2017" name="Plant J.">
        <title>Araport11: a complete reannotation of the Arabidopsis thaliana reference genome.</title>
        <authorList>
            <person name="Cheng C.Y."/>
            <person name="Krishnakumar V."/>
            <person name="Chan A.P."/>
            <person name="Thibaud-Nissen F."/>
            <person name="Schobel S."/>
            <person name="Town C.D."/>
        </authorList>
    </citation>
    <scope>GENOME REANNOTATION</scope>
    <source>
        <strain>cv. Columbia</strain>
    </source>
</reference>
<reference key="3">
    <citation type="journal article" date="2003" name="Science">
        <title>Empirical analysis of transcriptional activity in the Arabidopsis genome.</title>
        <authorList>
            <person name="Yamada K."/>
            <person name="Lim J."/>
            <person name="Dale J.M."/>
            <person name="Chen H."/>
            <person name="Shinn P."/>
            <person name="Palm C.J."/>
            <person name="Southwick A.M."/>
            <person name="Wu H.C."/>
            <person name="Kim C.J."/>
            <person name="Nguyen M."/>
            <person name="Pham P.K."/>
            <person name="Cheuk R.F."/>
            <person name="Karlin-Newmann G."/>
            <person name="Liu S.X."/>
            <person name="Lam B."/>
            <person name="Sakano H."/>
            <person name="Wu T."/>
            <person name="Yu G."/>
            <person name="Miranda M."/>
            <person name="Quach H.L."/>
            <person name="Tripp M."/>
            <person name="Chang C.H."/>
            <person name="Lee J.M."/>
            <person name="Toriumi M.J."/>
            <person name="Chan M.M."/>
            <person name="Tang C.C."/>
            <person name="Onodera C.S."/>
            <person name="Deng J.M."/>
            <person name="Akiyama K."/>
            <person name="Ansari Y."/>
            <person name="Arakawa T."/>
            <person name="Banh J."/>
            <person name="Banno F."/>
            <person name="Bowser L."/>
            <person name="Brooks S.Y."/>
            <person name="Carninci P."/>
            <person name="Chao Q."/>
            <person name="Choy N."/>
            <person name="Enju A."/>
            <person name="Goldsmith A.D."/>
            <person name="Gurjal M."/>
            <person name="Hansen N.F."/>
            <person name="Hayashizaki Y."/>
            <person name="Johnson-Hopson C."/>
            <person name="Hsuan V.W."/>
            <person name="Iida K."/>
            <person name="Karnes M."/>
            <person name="Khan S."/>
            <person name="Koesema E."/>
            <person name="Ishida J."/>
            <person name="Jiang P.X."/>
            <person name="Jones T."/>
            <person name="Kawai J."/>
            <person name="Kamiya A."/>
            <person name="Meyers C."/>
            <person name="Nakajima M."/>
            <person name="Narusaka M."/>
            <person name="Seki M."/>
            <person name="Sakurai T."/>
            <person name="Satou M."/>
            <person name="Tamse R."/>
            <person name="Vaysberg M."/>
            <person name="Wallender E.K."/>
            <person name="Wong C."/>
            <person name="Yamamura Y."/>
            <person name="Yuan S."/>
            <person name="Shinozaki K."/>
            <person name="Davis R.W."/>
            <person name="Theologis A."/>
            <person name="Ecker J.R."/>
        </authorList>
    </citation>
    <scope>NUCLEOTIDE SEQUENCE [LARGE SCALE MRNA]</scope>
    <source>
        <strain>cv. Columbia</strain>
    </source>
</reference>
<reference key="4">
    <citation type="submission" date="2006-07" db="EMBL/GenBank/DDBJ databases">
        <title>Large-scale analysis of RIKEN Arabidopsis full-length (RAFL) cDNAs.</title>
        <authorList>
            <person name="Totoki Y."/>
            <person name="Seki M."/>
            <person name="Ishida J."/>
            <person name="Nakajima M."/>
            <person name="Enju A."/>
            <person name="Kamiya A."/>
            <person name="Narusaka M."/>
            <person name="Shin-i T."/>
            <person name="Nakagawa M."/>
            <person name="Sakamoto N."/>
            <person name="Oishi K."/>
            <person name="Kohara Y."/>
            <person name="Kobayashi M."/>
            <person name="Toyoda A."/>
            <person name="Sakaki Y."/>
            <person name="Sakurai T."/>
            <person name="Iida K."/>
            <person name="Akiyama K."/>
            <person name="Satou M."/>
            <person name="Toyoda T."/>
            <person name="Konagaya A."/>
            <person name="Carninci P."/>
            <person name="Kawai J."/>
            <person name="Hayashizaki Y."/>
            <person name="Shinozaki K."/>
        </authorList>
    </citation>
    <scope>NUCLEOTIDE SEQUENCE [LARGE SCALE MRNA]</scope>
    <source>
        <strain>cv. Columbia</strain>
    </source>
</reference>
<reference key="5">
    <citation type="submission" date="2002-03" db="EMBL/GenBank/DDBJ databases">
        <title>Full-length cDNA from Arabidopsis thaliana.</title>
        <authorList>
            <person name="Brover V.V."/>
            <person name="Troukhan M.E."/>
            <person name="Alexandrov N.A."/>
            <person name="Lu Y.-P."/>
            <person name="Flavell R.B."/>
            <person name="Feldmann K.A."/>
        </authorList>
    </citation>
    <scope>NUCLEOTIDE SEQUENCE [LARGE SCALE MRNA]</scope>
</reference>
<reference key="6">
    <citation type="journal article" date="2008" name="J. Exp. Bot.">
        <title>Expression analysis of the Arabidopsis CP12 gene family suggests novel roles for these proteins in roots and floral tissues.</title>
        <authorList>
            <person name="Singh P."/>
            <person name="Kaloudas D."/>
            <person name="Raines C.A."/>
        </authorList>
    </citation>
    <scope>TISSUE SPECIFICITY</scope>
    <scope>DEVELOPMENTAL STAGE</scope>
    <scope>INDUCTION BY LIGHT AND HEAT</scope>
    <source>
        <strain>cv. Columbia</strain>
    </source>
</reference>
<reference key="7">
    <citation type="journal article" date="2010" name="J. Plant Physiol.">
        <title>In vitro characterization of Arabidopsis CP12 isoforms reveals common biochemical and molecular properties.</title>
        <authorList>
            <person name="Marri L."/>
            <person name="Pesaresi A."/>
            <person name="Valerio C."/>
            <person name="Lamba D."/>
            <person name="Pupillo P."/>
            <person name="Trost P."/>
            <person name="Sparla F."/>
        </authorList>
    </citation>
    <scope>FUNCTION</scope>
    <scope>SUBCELLULAR LOCATION</scope>
    <scope>SUBUNIT</scope>
    <scope>BIOPHYSICOCHEMICAL PROPERTIES</scope>
    <scope>DISULFIDE BOND</scope>
</reference>
<keyword id="KW-0113">Calvin cycle</keyword>
<keyword id="KW-0150">Chloroplast</keyword>
<keyword id="KW-0186">Copper</keyword>
<keyword id="KW-1015">Disulfide bond</keyword>
<keyword id="KW-0533">Nickel</keyword>
<keyword id="KW-0934">Plastid</keyword>
<keyword id="KW-1185">Reference proteome</keyword>
<keyword id="KW-0809">Transit peptide</keyword>